<organism>
    <name type="scientific">Corynebacterium glutamicum (strain R)</name>
    <dbReference type="NCBI Taxonomy" id="340322"/>
    <lineage>
        <taxon>Bacteria</taxon>
        <taxon>Bacillati</taxon>
        <taxon>Actinomycetota</taxon>
        <taxon>Actinomycetes</taxon>
        <taxon>Mycobacteriales</taxon>
        <taxon>Corynebacteriaceae</taxon>
        <taxon>Corynebacterium</taxon>
    </lineage>
</organism>
<feature type="chain" id="PRO_1000051563" description="Glucose-1-phosphate adenylyltransferase">
    <location>
        <begin position="1"/>
        <end position="409"/>
    </location>
</feature>
<feature type="binding site" evidence="1">
    <location>
        <position position="168"/>
    </location>
    <ligand>
        <name>alpha-D-glucose 1-phosphate</name>
        <dbReference type="ChEBI" id="CHEBI:58601"/>
    </ligand>
</feature>
<feature type="binding site" evidence="1">
    <location>
        <begin position="183"/>
        <end position="184"/>
    </location>
    <ligand>
        <name>alpha-D-glucose 1-phosphate</name>
        <dbReference type="ChEBI" id="CHEBI:58601"/>
    </ligand>
</feature>
<feature type="binding site" evidence="1">
    <location>
        <position position="201"/>
    </location>
    <ligand>
        <name>alpha-D-glucose 1-phosphate</name>
        <dbReference type="ChEBI" id="CHEBI:58601"/>
    </ligand>
</feature>
<evidence type="ECO:0000255" key="1">
    <source>
        <dbReference type="HAMAP-Rule" id="MF_00624"/>
    </source>
</evidence>
<proteinExistence type="inferred from homology"/>
<gene>
    <name evidence="1" type="primary">glgC</name>
    <name type="ordered locus">cgR_1202</name>
</gene>
<comment type="function">
    <text evidence="1">Involved in the biosynthesis of ADP-glucose, a building block required for the elongation reactions to produce glycogen. Catalyzes the reaction between ATP and alpha-D-glucose 1-phosphate (G1P) to produce pyrophosphate and ADP-Glc.</text>
</comment>
<comment type="catalytic activity">
    <reaction evidence="1">
        <text>alpha-D-glucose 1-phosphate + ATP + H(+) = ADP-alpha-D-glucose + diphosphate</text>
        <dbReference type="Rhea" id="RHEA:12120"/>
        <dbReference type="ChEBI" id="CHEBI:15378"/>
        <dbReference type="ChEBI" id="CHEBI:30616"/>
        <dbReference type="ChEBI" id="CHEBI:33019"/>
        <dbReference type="ChEBI" id="CHEBI:57498"/>
        <dbReference type="ChEBI" id="CHEBI:58601"/>
        <dbReference type="EC" id="2.7.7.27"/>
    </reaction>
</comment>
<comment type="pathway">
    <text evidence="1">Glycan biosynthesis; glycogen biosynthesis.</text>
</comment>
<comment type="subunit">
    <text evidence="1">Homotetramer.</text>
</comment>
<comment type="similarity">
    <text evidence="1">Belongs to the bacterial/plant glucose-1-phosphate adenylyltransferase family.</text>
</comment>
<reference key="1">
    <citation type="journal article" date="2007" name="Microbiology">
        <title>Comparative analysis of the Corynebacterium glutamicum group and complete genome sequence of strain R.</title>
        <authorList>
            <person name="Yukawa H."/>
            <person name="Omumasaba C.A."/>
            <person name="Nonaka H."/>
            <person name="Kos P."/>
            <person name="Okai N."/>
            <person name="Suzuki N."/>
            <person name="Suda M."/>
            <person name="Tsuge Y."/>
            <person name="Watanabe J."/>
            <person name="Ikeda Y."/>
            <person name="Vertes A.A."/>
            <person name="Inui M."/>
        </authorList>
    </citation>
    <scope>NUCLEOTIDE SEQUENCE [LARGE SCALE GENOMIC DNA]</scope>
    <source>
        <strain>R</strain>
    </source>
</reference>
<name>GLGC_CORGB</name>
<accession>A4QD83</accession>
<keyword id="KW-0067">ATP-binding</keyword>
<keyword id="KW-0119">Carbohydrate metabolism</keyword>
<keyword id="KW-0320">Glycogen biosynthesis</keyword>
<keyword id="KW-0321">Glycogen metabolism</keyword>
<keyword id="KW-0547">Nucleotide-binding</keyword>
<keyword id="KW-0548">Nucleotidyltransferase</keyword>
<keyword id="KW-0808">Transferase</keyword>
<sequence length="409" mass="44269">MVKGVKGRPNVLAIVLAGGEGKRLFPLTEDRAKPAVPFGGTYRLIDFVLSNLVNSGFLKIAVLTQYKSHSLDRHISLSWNVSGPTGQYIASVPAQQRLGKRWFTGSADAILQSLNLISDEKPDYVIVFGADHVYRMDPSQMLDEHIASGRAVSVAGIRVPREEATAFGCIQSDDDGNITEFLEKPADPPGTPDDPDMTYASMGNYIFTTEALIQALKDDENNENSDHDMGGDIIPYFVSRNDAHVYDFSGNIVPGATERDKGYWRDVGTIDAFYECHMDLISVHPIFNLYNSEWPIHTTSEGNLPPAKFVRGGIAQSSMVSSGSIISAGTVRNSVLSNNVVVEEGATVEGAVLMPGVRIGKGAVVRHAILDKNVVVRDGELIGVDHVRDAQRFKVSAGGVVVVGKNQVV</sequence>
<protein>
    <recommendedName>
        <fullName evidence="1">Glucose-1-phosphate adenylyltransferase</fullName>
        <ecNumber evidence="1">2.7.7.27</ecNumber>
    </recommendedName>
    <alternativeName>
        <fullName evidence="1">ADP-glucose pyrophosphorylase</fullName>
        <shortName evidence="1">ADPGlc PPase</shortName>
    </alternativeName>
    <alternativeName>
        <fullName evidence="1">ADP-glucose synthase</fullName>
    </alternativeName>
</protein>
<dbReference type="EC" id="2.7.7.27" evidence="1"/>
<dbReference type="EMBL" id="AP009044">
    <property type="protein sequence ID" value="BAF54180.1"/>
    <property type="molecule type" value="Genomic_DNA"/>
</dbReference>
<dbReference type="RefSeq" id="WP_003855005.1">
    <property type="nucleotide sequence ID" value="NC_009342.1"/>
</dbReference>
<dbReference type="SMR" id="A4QD83"/>
<dbReference type="KEGG" id="cgt:cgR_1202"/>
<dbReference type="HOGENOM" id="CLU_029499_14_1_11"/>
<dbReference type="PhylomeDB" id="A4QD83"/>
<dbReference type="UniPathway" id="UPA00164"/>
<dbReference type="Proteomes" id="UP000006698">
    <property type="component" value="Chromosome"/>
</dbReference>
<dbReference type="GO" id="GO:0005524">
    <property type="term" value="F:ATP binding"/>
    <property type="evidence" value="ECO:0007669"/>
    <property type="project" value="UniProtKB-KW"/>
</dbReference>
<dbReference type="GO" id="GO:0008878">
    <property type="term" value="F:glucose-1-phosphate adenylyltransferase activity"/>
    <property type="evidence" value="ECO:0007669"/>
    <property type="project" value="UniProtKB-UniRule"/>
</dbReference>
<dbReference type="GO" id="GO:0005978">
    <property type="term" value="P:glycogen biosynthetic process"/>
    <property type="evidence" value="ECO:0007669"/>
    <property type="project" value="UniProtKB-UniRule"/>
</dbReference>
<dbReference type="CDD" id="cd02508">
    <property type="entry name" value="ADP_Glucose_PP"/>
    <property type="match status" value="1"/>
</dbReference>
<dbReference type="CDD" id="cd04651">
    <property type="entry name" value="LbH_G1P_AT_C"/>
    <property type="match status" value="1"/>
</dbReference>
<dbReference type="Gene3D" id="2.160.10.10">
    <property type="entry name" value="Hexapeptide repeat proteins"/>
    <property type="match status" value="1"/>
</dbReference>
<dbReference type="Gene3D" id="3.90.550.10">
    <property type="entry name" value="Spore Coat Polysaccharide Biosynthesis Protein SpsA, Chain A"/>
    <property type="match status" value="1"/>
</dbReference>
<dbReference type="HAMAP" id="MF_00624">
    <property type="entry name" value="GlgC"/>
    <property type="match status" value="1"/>
</dbReference>
<dbReference type="InterPro" id="IPR011831">
    <property type="entry name" value="ADP-Glc_PPase"/>
</dbReference>
<dbReference type="InterPro" id="IPR005836">
    <property type="entry name" value="ADP_Glu_pyroP_CS"/>
</dbReference>
<dbReference type="InterPro" id="IPR023049">
    <property type="entry name" value="GlgC_bac"/>
</dbReference>
<dbReference type="InterPro" id="IPR056818">
    <property type="entry name" value="GlmU/GlgC-like_hexapep"/>
</dbReference>
<dbReference type="InterPro" id="IPR005835">
    <property type="entry name" value="NTP_transferase_dom"/>
</dbReference>
<dbReference type="InterPro" id="IPR029044">
    <property type="entry name" value="Nucleotide-diphossugar_trans"/>
</dbReference>
<dbReference type="InterPro" id="IPR011004">
    <property type="entry name" value="Trimer_LpxA-like_sf"/>
</dbReference>
<dbReference type="NCBIfam" id="TIGR02091">
    <property type="entry name" value="glgC"/>
    <property type="match status" value="1"/>
</dbReference>
<dbReference type="NCBIfam" id="NF001947">
    <property type="entry name" value="PRK00725.1"/>
    <property type="match status" value="1"/>
</dbReference>
<dbReference type="NCBIfam" id="NF002023">
    <property type="entry name" value="PRK00844.1"/>
    <property type="match status" value="1"/>
</dbReference>
<dbReference type="PANTHER" id="PTHR43523:SF2">
    <property type="entry name" value="GLUCOSE-1-PHOSPHATE ADENYLYLTRANSFERASE"/>
    <property type="match status" value="1"/>
</dbReference>
<dbReference type="PANTHER" id="PTHR43523">
    <property type="entry name" value="GLUCOSE-1-PHOSPHATE ADENYLYLTRANSFERASE-RELATED"/>
    <property type="match status" value="1"/>
</dbReference>
<dbReference type="Pfam" id="PF24894">
    <property type="entry name" value="Hexapep_GlmU"/>
    <property type="match status" value="1"/>
</dbReference>
<dbReference type="Pfam" id="PF00483">
    <property type="entry name" value="NTP_transferase"/>
    <property type="match status" value="1"/>
</dbReference>
<dbReference type="SUPFAM" id="SSF53448">
    <property type="entry name" value="Nucleotide-diphospho-sugar transferases"/>
    <property type="match status" value="1"/>
</dbReference>
<dbReference type="SUPFAM" id="SSF51161">
    <property type="entry name" value="Trimeric LpxA-like enzymes"/>
    <property type="match status" value="1"/>
</dbReference>
<dbReference type="PROSITE" id="PS00808">
    <property type="entry name" value="ADP_GLC_PYROPHOSPH_1"/>
    <property type="match status" value="1"/>
</dbReference>
<dbReference type="PROSITE" id="PS00809">
    <property type="entry name" value="ADP_GLC_PYROPHOSPH_2"/>
    <property type="match status" value="1"/>
</dbReference>
<dbReference type="PROSITE" id="PS00810">
    <property type="entry name" value="ADP_GLC_PYROPHOSPH_3"/>
    <property type="match status" value="1"/>
</dbReference>